<gene>
    <name evidence="1" type="primary">rplW</name>
    <name type="ordered locus">lwe2580</name>
</gene>
<proteinExistence type="inferred from homology"/>
<protein>
    <recommendedName>
        <fullName evidence="1">Large ribosomal subunit protein uL23</fullName>
    </recommendedName>
    <alternativeName>
        <fullName evidence="2">50S ribosomal protein L23</fullName>
    </alternativeName>
</protein>
<evidence type="ECO:0000255" key="1">
    <source>
        <dbReference type="HAMAP-Rule" id="MF_01369"/>
    </source>
</evidence>
<evidence type="ECO:0000305" key="2"/>
<dbReference type="EMBL" id="AM263198">
    <property type="protein sequence ID" value="CAK21998.1"/>
    <property type="molecule type" value="Genomic_DNA"/>
</dbReference>
<dbReference type="RefSeq" id="WP_003728540.1">
    <property type="nucleotide sequence ID" value="NC_008555.1"/>
</dbReference>
<dbReference type="SMR" id="A0ALW6"/>
<dbReference type="STRING" id="386043.lwe2580"/>
<dbReference type="GeneID" id="93240511"/>
<dbReference type="KEGG" id="lwe:lwe2580"/>
<dbReference type="eggNOG" id="COG0089">
    <property type="taxonomic scope" value="Bacteria"/>
</dbReference>
<dbReference type="HOGENOM" id="CLU_037562_3_2_9"/>
<dbReference type="OrthoDB" id="9793353at2"/>
<dbReference type="Proteomes" id="UP000000779">
    <property type="component" value="Chromosome"/>
</dbReference>
<dbReference type="GO" id="GO:1990904">
    <property type="term" value="C:ribonucleoprotein complex"/>
    <property type="evidence" value="ECO:0007669"/>
    <property type="project" value="UniProtKB-KW"/>
</dbReference>
<dbReference type="GO" id="GO:0005840">
    <property type="term" value="C:ribosome"/>
    <property type="evidence" value="ECO:0007669"/>
    <property type="project" value="UniProtKB-KW"/>
</dbReference>
<dbReference type="GO" id="GO:0019843">
    <property type="term" value="F:rRNA binding"/>
    <property type="evidence" value="ECO:0007669"/>
    <property type="project" value="UniProtKB-UniRule"/>
</dbReference>
<dbReference type="GO" id="GO:0003735">
    <property type="term" value="F:structural constituent of ribosome"/>
    <property type="evidence" value="ECO:0007669"/>
    <property type="project" value="InterPro"/>
</dbReference>
<dbReference type="GO" id="GO:0006412">
    <property type="term" value="P:translation"/>
    <property type="evidence" value="ECO:0007669"/>
    <property type="project" value="UniProtKB-UniRule"/>
</dbReference>
<dbReference type="FunFam" id="3.30.70.330:FF:000001">
    <property type="entry name" value="50S ribosomal protein L23"/>
    <property type="match status" value="1"/>
</dbReference>
<dbReference type="Gene3D" id="3.30.70.330">
    <property type="match status" value="1"/>
</dbReference>
<dbReference type="HAMAP" id="MF_01369_B">
    <property type="entry name" value="Ribosomal_uL23_B"/>
    <property type="match status" value="1"/>
</dbReference>
<dbReference type="InterPro" id="IPR012677">
    <property type="entry name" value="Nucleotide-bd_a/b_plait_sf"/>
</dbReference>
<dbReference type="InterPro" id="IPR013025">
    <property type="entry name" value="Ribosomal_uL23-like"/>
</dbReference>
<dbReference type="InterPro" id="IPR012678">
    <property type="entry name" value="Ribosomal_uL23/eL15/eS24_sf"/>
</dbReference>
<dbReference type="NCBIfam" id="NF004363">
    <property type="entry name" value="PRK05738.2-4"/>
    <property type="match status" value="1"/>
</dbReference>
<dbReference type="PANTHER" id="PTHR11620">
    <property type="entry name" value="60S RIBOSOMAL PROTEIN L23A"/>
    <property type="match status" value="1"/>
</dbReference>
<dbReference type="Pfam" id="PF00276">
    <property type="entry name" value="Ribosomal_L23"/>
    <property type="match status" value="1"/>
</dbReference>
<dbReference type="SUPFAM" id="SSF54189">
    <property type="entry name" value="Ribosomal proteins S24e, L23 and L15e"/>
    <property type="match status" value="1"/>
</dbReference>
<comment type="function">
    <text evidence="1">One of the early assembly proteins it binds 23S rRNA. One of the proteins that surrounds the polypeptide exit tunnel on the outside of the ribosome. Forms the main docking site for trigger factor binding to the ribosome.</text>
</comment>
<comment type="subunit">
    <text evidence="1">Part of the 50S ribosomal subunit. Contacts protein L29, and trigger factor when it is bound to the ribosome.</text>
</comment>
<comment type="similarity">
    <text evidence="1">Belongs to the universal ribosomal protein uL23 family.</text>
</comment>
<keyword id="KW-0687">Ribonucleoprotein</keyword>
<keyword id="KW-0689">Ribosomal protein</keyword>
<keyword id="KW-0694">RNA-binding</keyword>
<keyword id="KW-0699">rRNA-binding</keyword>
<organism>
    <name type="scientific">Listeria welshimeri serovar 6b (strain ATCC 35897 / DSM 20650 / CCUG 15529 / CIP 8149 / NCTC 11857 / SLCC 5334 / V8)</name>
    <dbReference type="NCBI Taxonomy" id="386043"/>
    <lineage>
        <taxon>Bacteria</taxon>
        <taxon>Bacillati</taxon>
        <taxon>Bacillota</taxon>
        <taxon>Bacilli</taxon>
        <taxon>Bacillales</taxon>
        <taxon>Listeriaceae</taxon>
        <taxon>Listeria</taxon>
    </lineage>
</organism>
<accession>A0ALW6</accession>
<reference key="1">
    <citation type="journal article" date="2006" name="J. Bacteriol.">
        <title>Whole-genome sequence of Listeria welshimeri reveals common steps in genome reduction with Listeria innocua as compared to Listeria monocytogenes.</title>
        <authorList>
            <person name="Hain T."/>
            <person name="Steinweg C."/>
            <person name="Kuenne C.T."/>
            <person name="Billion A."/>
            <person name="Ghai R."/>
            <person name="Chatterjee S.S."/>
            <person name="Domann E."/>
            <person name="Kaerst U."/>
            <person name="Goesmann A."/>
            <person name="Bekel T."/>
            <person name="Bartels D."/>
            <person name="Kaiser O."/>
            <person name="Meyer F."/>
            <person name="Puehler A."/>
            <person name="Weisshaar B."/>
            <person name="Wehland J."/>
            <person name="Liang C."/>
            <person name="Dandekar T."/>
            <person name="Lampidis R."/>
            <person name="Kreft J."/>
            <person name="Goebel W."/>
            <person name="Chakraborty T."/>
        </authorList>
    </citation>
    <scope>NUCLEOTIDE SEQUENCE [LARGE SCALE GENOMIC DNA]</scope>
    <source>
        <strain>ATCC 35897 / DSM 20650 / CCUG 15529 / CIP 8149 / NCTC 11857 / SLCC 5334 / V8</strain>
    </source>
</reference>
<name>RL23_LISW6</name>
<feature type="chain" id="PRO_1000068104" description="Large ribosomal subunit protein uL23">
    <location>
        <begin position="1"/>
        <end position="94"/>
    </location>
</feature>
<sequence length="94" mass="10930">MDARDIIKRPVVTEESTSILDDKKYTFEVDTRATKTQVKYAIEEIFDVKVAKVNVMNYKGKLKRMGRYAGYTNKRRKAIVTVTADSKEIQFFEV</sequence>